<feature type="chain" id="PRO_0000105679" description="HTH-type transcriptional regulator MetR">
    <location>
        <begin position="1"/>
        <end position="309"/>
    </location>
</feature>
<feature type="domain" description="HTH lysR-type" evidence="2">
    <location>
        <begin position="6"/>
        <end position="63"/>
    </location>
</feature>
<feature type="DNA-binding region" description="H-T-H motif" evidence="2">
    <location>
        <begin position="23"/>
        <end position="42"/>
    </location>
</feature>
<gene>
    <name type="primary">metR</name>
    <name type="ordered locus">HI_1739</name>
</gene>
<organism>
    <name type="scientific">Haemophilus influenzae (strain ATCC 51907 / DSM 11121 / KW20 / Rd)</name>
    <dbReference type="NCBI Taxonomy" id="71421"/>
    <lineage>
        <taxon>Bacteria</taxon>
        <taxon>Pseudomonadati</taxon>
        <taxon>Pseudomonadota</taxon>
        <taxon>Gammaproteobacteria</taxon>
        <taxon>Pasteurellales</taxon>
        <taxon>Pasteurellaceae</taxon>
        <taxon>Haemophilus</taxon>
    </lineage>
</organism>
<reference key="1">
    <citation type="journal article" date="1995" name="Science">
        <title>Whole-genome random sequencing and assembly of Haemophilus influenzae Rd.</title>
        <authorList>
            <person name="Fleischmann R.D."/>
            <person name="Adams M.D."/>
            <person name="White O."/>
            <person name="Clayton R.A."/>
            <person name="Kirkness E.F."/>
            <person name="Kerlavage A.R."/>
            <person name="Bult C.J."/>
            <person name="Tomb J.-F."/>
            <person name="Dougherty B.A."/>
            <person name="Merrick J.M."/>
            <person name="McKenney K."/>
            <person name="Sutton G.G."/>
            <person name="FitzHugh W."/>
            <person name="Fields C.A."/>
            <person name="Gocayne J.D."/>
            <person name="Scott J.D."/>
            <person name="Shirley R."/>
            <person name="Liu L.-I."/>
            <person name="Glodek A."/>
            <person name="Kelley J.M."/>
            <person name="Weidman J.F."/>
            <person name="Phillips C.A."/>
            <person name="Spriggs T."/>
            <person name="Hedblom E."/>
            <person name="Cotton M.D."/>
            <person name="Utterback T.R."/>
            <person name="Hanna M.C."/>
            <person name="Nguyen D.T."/>
            <person name="Saudek D.M."/>
            <person name="Brandon R.C."/>
            <person name="Fine L.D."/>
            <person name="Fritchman J.L."/>
            <person name="Fuhrmann J.L."/>
            <person name="Geoghagen N.S.M."/>
            <person name="Gnehm C.L."/>
            <person name="McDonald L.A."/>
            <person name="Small K.V."/>
            <person name="Fraser C.M."/>
            <person name="Smith H.O."/>
            <person name="Venter J.C."/>
        </authorList>
    </citation>
    <scope>NUCLEOTIDE SEQUENCE [LARGE SCALE GENOMIC DNA]</scope>
    <source>
        <strain>ATCC 51907 / DSM 11121 / KW20 / Rd</strain>
    </source>
</reference>
<dbReference type="EMBL" id="L42023">
    <property type="protein sequence ID" value="AAC23383.1"/>
    <property type="molecule type" value="Genomic_DNA"/>
</dbReference>
<dbReference type="PIR" id="D64139">
    <property type="entry name" value="D64139"/>
</dbReference>
<dbReference type="RefSeq" id="NP_439881.1">
    <property type="nucleotide sequence ID" value="NC_000907.1"/>
</dbReference>
<dbReference type="SMR" id="P45349"/>
<dbReference type="STRING" id="71421.HI_1739"/>
<dbReference type="DNASU" id="950886"/>
<dbReference type="EnsemblBacteria" id="AAC23383">
    <property type="protein sequence ID" value="AAC23383"/>
    <property type="gene ID" value="HI_1739"/>
</dbReference>
<dbReference type="KEGG" id="hin:HI_1739"/>
<dbReference type="PATRIC" id="fig|71421.8.peg.1820"/>
<dbReference type="eggNOG" id="COG0583">
    <property type="taxonomic scope" value="Bacteria"/>
</dbReference>
<dbReference type="HOGENOM" id="CLU_039613_6_0_6"/>
<dbReference type="OrthoDB" id="155872at2"/>
<dbReference type="PhylomeDB" id="P45349"/>
<dbReference type="BioCyc" id="HINF71421:G1GJ1-1755-MONOMER"/>
<dbReference type="Proteomes" id="UP000000579">
    <property type="component" value="Chromosome"/>
</dbReference>
<dbReference type="GO" id="GO:0005737">
    <property type="term" value="C:cytoplasm"/>
    <property type="evidence" value="ECO:0007669"/>
    <property type="project" value="UniProtKB-SubCell"/>
</dbReference>
<dbReference type="GO" id="GO:0003700">
    <property type="term" value="F:DNA-binding transcription factor activity"/>
    <property type="evidence" value="ECO:0007669"/>
    <property type="project" value="InterPro"/>
</dbReference>
<dbReference type="GO" id="GO:0000976">
    <property type="term" value="F:transcription cis-regulatory region binding"/>
    <property type="evidence" value="ECO:0000318"/>
    <property type="project" value="GO_Central"/>
</dbReference>
<dbReference type="GO" id="GO:0009086">
    <property type="term" value="P:methionine biosynthetic process"/>
    <property type="evidence" value="ECO:0007669"/>
    <property type="project" value="UniProtKB-KW"/>
</dbReference>
<dbReference type="GO" id="GO:0006355">
    <property type="term" value="P:regulation of DNA-templated transcription"/>
    <property type="evidence" value="ECO:0000318"/>
    <property type="project" value="GO_Central"/>
</dbReference>
<dbReference type="CDD" id="cd08441">
    <property type="entry name" value="PBP2_MetR"/>
    <property type="match status" value="1"/>
</dbReference>
<dbReference type="Gene3D" id="3.40.190.10">
    <property type="entry name" value="Periplasmic binding protein-like II"/>
    <property type="match status" value="2"/>
</dbReference>
<dbReference type="Gene3D" id="1.10.10.10">
    <property type="entry name" value="Winged helix-like DNA-binding domain superfamily/Winged helix DNA-binding domain"/>
    <property type="match status" value="1"/>
</dbReference>
<dbReference type="InterPro" id="IPR005119">
    <property type="entry name" value="LysR_subst-bd"/>
</dbReference>
<dbReference type="InterPro" id="IPR037406">
    <property type="entry name" value="MetR_PBP2"/>
</dbReference>
<dbReference type="InterPro" id="IPR000847">
    <property type="entry name" value="Tscrpt_reg_HTH_LysR"/>
</dbReference>
<dbReference type="InterPro" id="IPR036388">
    <property type="entry name" value="WH-like_DNA-bd_sf"/>
</dbReference>
<dbReference type="InterPro" id="IPR036390">
    <property type="entry name" value="WH_DNA-bd_sf"/>
</dbReference>
<dbReference type="PANTHER" id="PTHR30126">
    <property type="entry name" value="HTH-TYPE TRANSCRIPTIONAL REGULATOR"/>
    <property type="match status" value="1"/>
</dbReference>
<dbReference type="PANTHER" id="PTHR30126:SF25">
    <property type="entry name" value="HTH-TYPE TRANSCRIPTIONAL REGULATOR METR"/>
    <property type="match status" value="1"/>
</dbReference>
<dbReference type="Pfam" id="PF00126">
    <property type="entry name" value="HTH_1"/>
    <property type="match status" value="1"/>
</dbReference>
<dbReference type="Pfam" id="PF03466">
    <property type="entry name" value="LysR_substrate"/>
    <property type="match status" value="1"/>
</dbReference>
<dbReference type="PRINTS" id="PR00039">
    <property type="entry name" value="HTHLYSR"/>
</dbReference>
<dbReference type="SUPFAM" id="SSF53850">
    <property type="entry name" value="Periplasmic binding protein-like II"/>
    <property type="match status" value="1"/>
</dbReference>
<dbReference type="SUPFAM" id="SSF46785">
    <property type="entry name" value="Winged helix' DNA-binding domain"/>
    <property type="match status" value="1"/>
</dbReference>
<dbReference type="PROSITE" id="PS50931">
    <property type="entry name" value="HTH_LYSR"/>
    <property type="match status" value="1"/>
</dbReference>
<accession>P45349</accession>
<evidence type="ECO:0000250" key="1"/>
<evidence type="ECO:0000255" key="2">
    <source>
        <dbReference type="PROSITE-ProRule" id="PRU00253"/>
    </source>
</evidence>
<evidence type="ECO:0000305" key="3"/>
<protein>
    <recommendedName>
        <fullName>HTH-type transcriptional regulator MetR</fullName>
    </recommendedName>
</protein>
<sequence length="309" mass="35345">MKPTFLEFRHLKTLLALKETGSVSLAAKRVYLTQSALSHQIKLIEEQFGLPLFERKSNPLRFTSAGERLIRLANEVMPKVIDAERDLARVKHGDAGQLRIAVECHTCFDWLMPAMDEFRQHWGLVELDIVSGFHTDPVGLLLSHRADWAIVSEIEHNDDVIFKPLFSYEMVGICSKNHSLAEKDIWEAEDFIDETWVTYPVPDDMLDLWRKVLKSKGINPTRRTTELTIAMIQLVASRRGIATIPYWAALPYLEKGYVVARKVTKEGLYSNLYAAIRKEDESLSYLEDFYQTVKSQSFSTLPGLSVLNL</sequence>
<keyword id="KW-0010">Activator</keyword>
<keyword id="KW-0028">Amino-acid biosynthesis</keyword>
<keyword id="KW-0963">Cytoplasm</keyword>
<keyword id="KW-0238">DNA-binding</keyword>
<keyword id="KW-0486">Methionine biosynthesis</keyword>
<keyword id="KW-1185">Reference proteome</keyword>
<keyword id="KW-0678">Repressor</keyword>
<keyword id="KW-0804">Transcription</keyword>
<keyword id="KW-0805">Transcription regulation</keyword>
<comment type="function">
    <text evidence="1">Control of the last step in methionine biosynthesis; MetR is a positive activator of the metA, metE and metH genes.</text>
</comment>
<comment type="subcellular location">
    <subcellularLocation>
        <location evidence="1">Cytoplasm</location>
    </subcellularLocation>
</comment>
<comment type="similarity">
    <text evidence="3">Belongs to the LysR transcriptional regulatory family.</text>
</comment>
<name>METR_HAEIN</name>
<proteinExistence type="inferred from homology"/>